<accession>B0CJ51</accession>
<comment type="function">
    <text evidence="1">With CysN forms the ATP sulfurylase (ATPS) that catalyzes the adenylation of sulfate producing adenosine 5'-phosphosulfate (APS) and diphosphate, the first enzymatic step in sulfur assimilation pathway. APS synthesis involves the formation of a high-energy phosphoric-sulfuric acid anhydride bond driven by GTP hydrolysis by CysN coupled to ATP hydrolysis by CysD.</text>
</comment>
<comment type="catalytic activity">
    <reaction evidence="1">
        <text>sulfate + ATP + H(+) = adenosine 5'-phosphosulfate + diphosphate</text>
        <dbReference type="Rhea" id="RHEA:18133"/>
        <dbReference type="ChEBI" id="CHEBI:15378"/>
        <dbReference type="ChEBI" id="CHEBI:16189"/>
        <dbReference type="ChEBI" id="CHEBI:30616"/>
        <dbReference type="ChEBI" id="CHEBI:33019"/>
        <dbReference type="ChEBI" id="CHEBI:58243"/>
        <dbReference type="EC" id="2.7.7.4"/>
    </reaction>
</comment>
<comment type="pathway">
    <text evidence="1">Sulfur metabolism; hydrogen sulfide biosynthesis; sulfite from sulfate: step 1/3.</text>
</comment>
<comment type="subunit">
    <text evidence="1">Heterodimer composed of CysD, the smaller subunit, and CysN.</text>
</comment>
<comment type="similarity">
    <text evidence="1">Belongs to the PAPS reductase family. CysD subfamily.</text>
</comment>
<proteinExistence type="inferred from homology"/>
<sequence length="300" mass="34743">MKNLTHLQRLEAEAIHVFREVAATFSNPVMLYSVGKDSSVMLHLAMKAFYPAPPPFPFLHVDTTWKFREMIEFRDAQAREKGFELLVHVNEQGVRDGIGPFTHGSNVHTHIMKTVGLRQALDKYRFDAAFGGARRDEEKSRAKERIFSFRNAQHGWDPKNQRPEMWKIYNTRVSKGESIRVFPLSNWTELDIWQYILQENIPIVPLYFAARRPVVERDGMLIMVDDDRMKLRPGEQVENRLVRFRTLGCYPLTGAIPSSAANLSDIVEEMLIARTSERQGRAIDRDEAGSMEKKKREGYF</sequence>
<dbReference type="EC" id="2.7.7.4" evidence="1"/>
<dbReference type="EMBL" id="CP000911">
    <property type="protein sequence ID" value="ABY37295.1"/>
    <property type="molecule type" value="Genomic_DNA"/>
</dbReference>
<dbReference type="SMR" id="B0CJ51"/>
<dbReference type="KEGG" id="bmt:BSUIS_A0193"/>
<dbReference type="HOGENOM" id="CLU_043026_0_0_5"/>
<dbReference type="UniPathway" id="UPA00140">
    <property type="reaction ID" value="UER00204"/>
</dbReference>
<dbReference type="Proteomes" id="UP000008545">
    <property type="component" value="Chromosome I"/>
</dbReference>
<dbReference type="GO" id="GO:0005524">
    <property type="term" value="F:ATP binding"/>
    <property type="evidence" value="ECO:0007669"/>
    <property type="project" value="UniProtKB-KW"/>
</dbReference>
<dbReference type="GO" id="GO:0004781">
    <property type="term" value="F:sulfate adenylyltransferase (ATP) activity"/>
    <property type="evidence" value="ECO:0007669"/>
    <property type="project" value="UniProtKB-UniRule"/>
</dbReference>
<dbReference type="GO" id="GO:0070814">
    <property type="term" value="P:hydrogen sulfide biosynthetic process"/>
    <property type="evidence" value="ECO:0007669"/>
    <property type="project" value="UniProtKB-UniRule"/>
</dbReference>
<dbReference type="GO" id="GO:0000103">
    <property type="term" value="P:sulfate assimilation"/>
    <property type="evidence" value="ECO:0007669"/>
    <property type="project" value="UniProtKB-UniRule"/>
</dbReference>
<dbReference type="CDD" id="cd23946">
    <property type="entry name" value="Sulfate_adenylyltransferase_2"/>
    <property type="match status" value="1"/>
</dbReference>
<dbReference type="FunFam" id="3.40.50.620:FF:000002">
    <property type="entry name" value="Sulfate adenylyltransferase subunit 2"/>
    <property type="match status" value="1"/>
</dbReference>
<dbReference type="Gene3D" id="3.40.50.620">
    <property type="entry name" value="HUPs"/>
    <property type="match status" value="1"/>
</dbReference>
<dbReference type="HAMAP" id="MF_00064">
    <property type="entry name" value="Sulf_adenylyltr_sub2"/>
    <property type="match status" value="1"/>
</dbReference>
<dbReference type="InterPro" id="IPR002500">
    <property type="entry name" value="PAPS_reduct_dom"/>
</dbReference>
<dbReference type="InterPro" id="IPR014729">
    <property type="entry name" value="Rossmann-like_a/b/a_fold"/>
</dbReference>
<dbReference type="InterPro" id="IPR011784">
    <property type="entry name" value="SO4_adenylTrfase_ssu"/>
</dbReference>
<dbReference type="InterPro" id="IPR050128">
    <property type="entry name" value="Sulfate_adenylyltrnsfr_sub2"/>
</dbReference>
<dbReference type="NCBIfam" id="TIGR02039">
    <property type="entry name" value="CysD"/>
    <property type="match status" value="1"/>
</dbReference>
<dbReference type="NCBIfam" id="NF003587">
    <property type="entry name" value="PRK05253.1"/>
    <property type="match status" value="1"/>
</dbReference>
<dbReference type="NCBIfam" id="NF009214">
    <property type="entry name" value="PRK12563.1"/>
    <property type="match status" value="1"/>
</dbReference>
<dbReference type="PANTHER" id="PTHR43196">
    <property type="entry name" value="SULFATE ADENYLYLTRANSFERASE SUBUNIT 2"/>
    <property type="match status" value="1"/>
</dbReference>
<dbReference type="PANTHER" id="PTHR43196:SF1">
    <property type="entry name" value="SULFATE ADENYLYLTRANSFERASE SUBUNIT 2"/>
    <property type="match status" value="1"/>
</dbReference>
<dbReference type="Pfam" id="PF01507">
    <property type="entry name" value="PAPS_reduct"/>
    <property type="match status" value="1"/>
</dbReference>
<dbReference type="PIRSF" id="PIRSF002936">
    <property type="entry name" value="CysDAde_trans"/>
    <property type="match status" value="1"/>
</dbReference>
<dbReference type="SUPFAM" id="SSF52402">
    <property type="entry name" value="Adenine nucleotide alpha hydrolases-like"/>
    <property type="match status" value="1"/>
</dbReference>
<gene>
    <name evidence="1" type="primary">cysD</name>
    <name type="ordered locus">BSUIS_A0193</name>
</gene>
<evidence type="ECO:0000255" key="1">
    <source>
        <dbReference type="HAMAP-Rule" id="MF_00064"/>
    </source>
</evidence>
<evidence type="ECO:0000256" key="2">
    <source>
        <dbReference type="SAM" id="MobiDB-lite"/>
    </source>
</evidence>
<organism>
    <name type="scientific">Brucella suis (strain ATCC 23445 / NCTC 10510)</name>
    <dbReference type="NCBI Taxonomy" id="470137"/>
    <lineage>
        <taxon>Bacteria</taxon>
        <taxon>Pseudomonadati</taxon>
        <taxon>Pseudomonadota</taxon>
        <taxon>Alphaproteobacteria</taxon>
        <taxon>Hyphomicrobiales</taxon>
        <taxon>Brucellaceae</taxon>
        <taxon>Brucella/Ochrobactrum group</taxon>
        <taxon>Brucella</taxon>
    </lineage>
</organism>
<protein>
    <recommendedName>
        <fullName evidence="1">Sulfate adenylyltransferase subunit 2</fullName>
        <ecNumber evidence="1">2.7.7.4</ecNumber>
    </recommendedName>
    <alternativeName>
        <fullName evidence="1">ATP-sulfurylase small subunit</fullName>
    </alternativeName>
    <alternativeName>
        <fullName evidence="1">Sulfate adenylate transferase</fullName>
        <shortName evidence="1">SAT</shortName>
    </alternativeName>
</protein>
<feature type="chain" id="PRO_0000340188" description="Sulfate adenylyltransferase subunit 2">
    <location>
        <begin position="1"/>
        <end position="300"/>
    </location>
</feature>
<feature type="region of interest" description="Disordered" evidence="2">
    <location>
        <begin position="281"/>
        <end position="300"/>
    </location>
</feature>
<name>CYSD_BRUSI</name>
<reference key="1">
    <citation type="submission" date="2007-12" db="EMBL/GenBank/DDBJ databases">
        <title>Brucella suis ATCC 23445 whole genome shotgun sequencing project.</title>
        <authorList>
            <person name="Setubal J.C."/>
            <person name="Bowns C."/>
            <person name="Boyle S."/>
            <person name="Crasta O.R."/>
            <person name="Czar M.J."/>
            <person name="Dharmanolla C."/>
            <person name="Gillespie J.J."/>
            <person name="Kenyon R.W."/>
            <person name="Lu J."/>
            <person name="Mane S."/>
            <person name="Mohapatra S."/>
            <person name="Nagrani S."/>
            <person name="Purkayastha A."/>
            <person name="Rajasimha H.K."/>
            <person name="Shallom J.M."/>
            <person name="Shallom S."/>
            <person name="Shukla M."/>
            <person name="Snyder E.E."/>
            <person name="Sobral B.W."/>
            <person name="Wattam A.R."/>
            <person name="Will R."/>
            <person name="Williams K."/>
            <person name="Yoo H."/>
            <person name="Bruce D."/>
            <person name="Detter C."/>
            <person name="Munk C."/>
            <person name="Brettin T.S."/>
        </authorList>
    </citation>
    <scope>NUCLEOTIDE SEQUENCE [LARGE SCALE GENOMIC DNA]</scope>
    <source>
        <strain>ATCC 23445 / NCTC 10510</strain>
    </source>
</reference>
<keyword id="KW-0067">ATP-binding</keyword>
<keyword id="KW-0547">Nucleotide-binding</keyword>
<keyword id="KW-0548">Nucleotidyltransferase</keyword>
<keyword id="KW-0808">Transferase</keyword>